<keyword id="KW-0004">4Fe-4S</keyword>
<keyword id="KW-0963">Cytoplasm</keyword>
<keyword id="KW-0408">Iron</keyword>
<keyword id="KW-0411">Iron-sulfur</keyword>
<keyword id="KW-0479">Metal-binding</keyword>
<keyword id="KW-1185">Reference proteome</keyword>
<keyword id="KW-0949">S-adenosyl-L-methionine</keyword>
<keyword id="KW-0808">Transferase</keyword>
<gene>
    <name evidence="1" type="primary">rimO</name>
    <name type="ordered locus">Bphy_0973</name>
</gene>
<comment type="function">
    <text evidence="1">Catalyzes the methylthiolation of an aspartic acid residue of ribosomal protein uS12.</text>
</comment>
<comment type="catalytic activity">
    <reaction evidence="1">
        <text>L-aspartate(89)-[ribosomal protein uS12]-hydrogen + (sulfur carrier)-SH + AH2 + 2 S-adenosyl-L-methionine = 3-methylsulfanyl-L-aspartate(89)-[ribosomal protein uS12]-hydrogen + (sulfur carrier)-H + 5'-deoxyadenosine + L-methionine + A + S-adenosyl-L-homocysteine + 2 H(+)</text>
        <dbReference type="Rhea" id="RHEA:37087"/>
        <dbReference type="Rhea" id="RHEA-COMP:10460"/>
        <dbReference type="Rhea" id="RHEA-COMP:10461"/>
        <dbReference type="Rhea" id="RHEA-COMP:14737"/>
        <dbReference type="Rhea" id="RHEA-COMP:14739"/>
        <dbReference type="ChEBI" id="CHEBI:13193"/>
        <dbReference type="ChEBI" id="CHEBI:15378"/>
        <dbReference type="ChEBI" id="CHEBI:17319"/>
        <dbReference type="ChEBI" id="CHEBI:17499"/>
        <dbReference type="ChEBI" id="CHEBI:29917"/>
        <dbReference type="ChEBI" id="CHEBI:29961"/>
        <dbReference type="ChEBI" id="CHEBI:57844"/>
        <dbReference type="ChEBI" id="CHEBI:57856"/>
        <dbReference type="ChEBI" id="CHEBI:59789"/>
        <dbReference type="ChEBI" id="CHEBI:64428"/>
        <dbReference type="ChEBI" id="CHEBI:73599"/>
        <dbReference type="EC" id="2.8.4.4"/>
    </reaction>
</comment>
<comment type="cofactor">
    <cofactor evidence="1">
        <name>[4Fe-4S] cluster</name>
        <dbReference type="ChEBI" id="CHEBI:49883"/>
    </cofactor>
    <text evidence="1">Binds 2 [4Fe-4S] clusters. One cluster is coordinated with 3 cysteines and an exchangeable S-adenosyl-L-methionine.</text>
</comment>
<comment type="subcellular location">
    <subcellularLocation>
        <location evidence="1">Cytoplasm</location>
    </subcellularLocation>
</comment>
<comment type="similarity">
    <text evidence="1">Belongs to the methylthiotransferase family. RimO subfamily.</text>
</comment>
<organism>
    <name type="scientific">Paraburkholderia phymatum (strain DSM 17167 / CIP 108236 / LMG 21445 / STM815)</name>
    <name type="common">Burkholderia phymatum</name>
    <dbReference type="NCBI Taxonomy" id="391038"/>
    <lineage>
        <taxon>Bacteria</taxon>
        <taxon>Pseudomonadati</taxon>
        <taxon>Pseudomonadota</taxon>
        <taxon>Betaproteobacteria</taxon>
        <taxon>Burkholderiales</taxon>
        <taxon>Burkholderiaceae</taxon>
        <taxon>Paraburkholderia</taxon>
    </lineage>
</organism>
<proteinExistence type="inferred from homology"/>
<name>RIMO_PARP8</name>
<accession>B2JG80</accession>
<feature type="chain" id="PRO_0000374739" description="Ribosomal protein uS12 methylthiotransferase RimO">
    <location>
        <begin position="1"/>
        <end position="463"/>
    </location>
</feature>
<feature type="domain" description="MTTase N-terminal" evidence="1">
    <location>
        <begin position="15"/>
        <end position="130"/>
    </location>
</feature>
<feature type="domain" description="Radical SAM core" evidence="2">
    <location>
        <begin position="147"/>
        <end position="392"/>
    </location>
</feature>
<feature type="domain" description="TRAM" evidence="1">
    <location>
        <begin position="395"/>
        <end position="463"/>
    </location>
</feature>
<feature type="binding site" evidence="1">
    <location>
        <position position="24"/>
    </location>
    <ligand>
        <name>[4Fe-4S] cluster</name>
        <dbReference type="ChEBI" id="CHEBI:49883"/>
        <label>1</label>
    </ligand>
</feature>
<feature type="binding site" evidence="1">
    <location>
        <position position="60"/>
    </location>
    <ligand>
        <name>[4Fe-4S] cluster</name>
        <dbReference type="ChEBI" id="CHEBI:49883"/>
        <label>1</label>
    </ligand>
</feature>
<feature type="binding site" evidence="1">
    <location>
        <position position="89"/>
    </location>
    <ligand>
        <name>[4Fe-4S] cluster</name>
        <dbReference type="ChEBI" id="CHEBI:49883"/>
        <label>1</label>
    </ligand>
</feature>
<feature type="binding site" evidence="1">
    <location>
        <position position="161"/>
    </location>
    <ligand>
        <name>[4Fe-4S] cluster</name>
        <dbReference type="ChEBI" id="CHEBI:49883"/>
        <label>2</label>
        <note>4Fe-4S-S-AdoMet</note>
    </ligand>
</feature>
<feature type="binding site" evidence="1">
    <location>
        <position position="165"/>
    </location>
    <ligand>
        <name>[4Fe-4S] cluster</name>
        <dbReference type="ChEBI" id="CHEBI:49883"/>
        <label>2</label>
        <note>4Fe-4S-S-AdoMet</note>
    </ligand>
</feature>
<feature type="binding site" evidence="1">
    <location>
        <position position="168"/>
    </location>
    <ligand>
        <name>[4Fe-4S] cluster</name>
        <dbReference type="ChEBI" id="CHEBI:49883"/>
        <label>2</label>
        <note>4Fe-4S-S-AdoMet</note>
    </ligand>
</feature>
<dbReference type="EC" id="2.8.4.4" evidence="1"/>
<dbReference type="EMBL" id="CP001043">
    <property type="protein sequence ID" value="ACC70162.1"/>
    <property type="molecule type" value="Genomic_DNA"/>
</dbReference>
<dbReference type="RefSeq" id="WP_012400379.1">
    <property type="nucleotide sequence ID" value="NC_010622.1"/>
</dbReference>
<dbReference type="SMR" id="B2JG80"/>
<dbReference type="STRING" id="391038.Bphy_0973"/>
<dbReference type="KEGG" id="bph:Bphy_0973"/>
<dbReference type="eggNOG" id="COG0621">
    <property type="taxonomic scope" value="Bacteria"/>
</dbReference>
<dbReference type="HOGENOM" id="CLU_018697_0_0_4"/>
<dbReference type="OrthoDB" id="9805215at2"/>
<dbReference type="Proteomes" id="UP000001192">
    <property type="component" value="Chromosome 1"/>
</dbReference>
<dbReference type="GO" id="GO:0005829">
    <property type="term" value="C:cytosol"/>
    <property type="evidence" value="ECO:0007669"/>
    <property type="project" value="TreeGrafter"/>
</dbReference>
<dbReference type="GO" id="GO:0051539">
    <property type="term" value="F:4 iron, 4 sulfur cluster binding"/>
    <property type="evidence" value="ECO:0007669"/>
    <property type="project" value="UniProtKB-UniRule"/>
</dbReference>
<dbReference type="GO" id="GO:0035599">
    <property type="term" value="F:aspartic acid methylthiotransferase activity"/>
    <property type="evidence" value="ECO:0007669"/>
    <property type="project" value="TreeGrafter"/>
</dbReference>
<dbReference type="GO" id="GO:0046872">
    <property type="term" value="F:metal ion binding"/>
    <property type="evidence" value="ECO:0007669"/>
    <property type="project" value="UniProtKB-KW"/>
</dbReference>
<dbReference type="GO" id="GO:0103039">
    <property type="term" value="F:protein methylthiotransferase activity"/>
    <property type="evidence" value="ECO:0007669"/>
    <property type="project" value="UniProtKB-EC"/>
</dbReference>
<dbReference type="GO" id="GO:0006400">
    <property type="term" value="P:tRNA modification"/>
    <property type="evidence" value="ECO:0007669"/>
    <property type="project" value="InterPro"/>
</dbReference>
<dbReference type="CDD" id="cd01335">
    <property type="entry name" value="Radical_SAM"/>
    <property type="match status" value="1"/>
</dbReference>
<dbReference type="FunFam" id="3.40.50.12160:FF:000002">
    <property type="entry name" value="Ribosomal protein S12 methylthiotransferase RimO"/>
    <property type="match status" value="1"/>
</dbReference>
<dbReference type="FunFam" id="3.80.30.20:FF:000001">
    <property type="entry name" value="tRNA-2-methylthio-N(6)-dimethylallyladenosine synthase 2"/>
    <property type="match status" value="1"/>
</dbReference>
<dbReference type="Gene3D" id="3.40.50.12160">
    <property type="entry name" value="Methylthiotransferase, N-terminal domain"/>
    <property type="match status" value="1"/>
</dbReference>
<dbReference type="Gene3D" id="2.40.50.140">
    <property type="entry name" value="Nucleic acid-binding proteins"/>
    <property type="match status" value="1"/>
</dbReference>
<dbReference type="Gene3D" id="3.80.30.20">
    <property type="entry name" value="tm_1862 like domain"/>
    <property type="match status" value="1"/>
</dbReference>
<dbReference type="HAMAP" id="MF_01865">
    <property type="entry name" value="MTTase_RimO"/>
    <property type="match status" value="1"/>
</dbReference>
<dbReference type="InterPro" id="IPR006638">
    <property type="entry name" value="Elp3/MiaA/NifB-like_rSAM"/>
</dbReference>
<dbReference type="InterPro" id="IPR005839">
    <property type="entry name" value="Methylthiotransferase"/>
</dbReference>
<dbReference type="InterPro" id="IPR020612">
    <property type="entry name" value="Methylthiotransferase_CS"/>
</dbReference>
<dbReference type="InterPro" id="IPR013848">
    <property type="entry name" value="Methylthiotransferase_N"/>
</dbReference>
<dbReference type="InterPro" id="IPR038135">
    <property type="entry name" value="Methylthiotransferase_N_sf"/>
</dbReference>
<dbReference type="InterPro" id="IPR012340">
    <property type="entry name" value="NA-bd_OB-fold"/>
</dbReference>
<dbReference type="InterPro" id="IPR005840">
    <property type="entry name" value="Ribosomal_uS12_MeSTrfase_RimO"/>
</dbReference>
<dbReference type="InterPro" id="IPR007197">
    <property type="entry name" value="rSAM"/>
</dbReference>
<dbReference type="InterPro" id="IPR023404">
    <property type="entry name" value="rSAM_horseshoe"/>
</dbReference>
<dbReference type="InterPro" id="IPR002792">
    <property type="entry name" value="TRAM_dom"/>
</dbReference>
<dbReference type="NCBIfam" id="TIGR01125">
    <property type="entry name" value="30S ribosomal protein S12 methylthiotransferase RimO"/>
    <property type="match status" value="1"/>
</dbReference>
<dbReference type="NCBIfam" id="TIGR00089">
    <property type="entry name" value="MiaB/RimO family radical SAM methylthiotransferase"/>
    <property type="match status" value="1"/>
</dbReference>
<dbReference type="PANTHER" id="PTHR43837">
    <property type="entry name" value="RIBOSOMAL PROTEIN S12 METHYLTHIOTRANSFERASE RIMO"/>
    <property type="match status" value="1"/>
</dbReference>
<dbReference type="PANTHER" id="PTHR43837:SF1">
    <property type="entry name" value="RIBOSOMAL PROTEIN US12 METHYLTHIOTRANSFERASE RIMO"/>
    <property type="match status" value="1"/>
</dbReference>
<dbReference type="Pfam" id="PF04055">
    <property type="entry name" value="Radical_SAM"/>
    <property type="match status" value="1"/>
</dbReference>
<dbReference type="Pfam" id="PF18693">
    <property type="entry name" value="TRAM_2"/>
    <property type="match status" value="1"/>
</dbReference>
<dbReference type="Pfam" id="PF00919">
    <property type="entry name" value="UPF0004"/>
    <property type="match status" value="1"/>
</dbReference>
<dbReference type="SFLD" id="SFLDG01082">
    <property type="entry name" value="B12-binding_domain_containing"/>
    <property type="match status" value="1"/>
</dbReference>
<dbReference type="SFLD" id="SFLDS00029">
    <property type="entry name" value="Radical_SAM"/>
    <property type="match status" value="1"/>
</dbReference>
<dbReference type="SFLD" id="SFLDF00274">
    <property type="entry name" value="ribosomal_protein_S12_methylth"/>
    <property type="match status" value="1"/>
</dbReference>
<dbReference type="SMART" id="SM00729">
    <property type="entry name" value="Elp3"/>
    <property type="match status" value="1"/>
</dbReference>
<dbReference type="SUPFAM" id="SSF102114">
    <property type="entry name" value="Radical SAM enzymes"/>
    <property type="match status" value="1"/>
</dbReference>
<dbReference type="PROSITE" id="PS51449">
    <property type="entry name" value="MTTASE_N"/>
    <property type="match status" value="1"/>
</dbReference>
<dbReference type="PROSITE" id="PS01278">
    <property type="entry name" value="MTTASE_RADICAL"/>
    <property type="match status" value="1"/>
</dbReference>
<dbReference type="PROSITE" id="PS51918">
    <property type="entry name" value="RADICAL_SAM"/>
    <property type="match status" value="1"/>
</dbReference>
<dbReference type="PROSITE" id="PS50926">
    <property type="entry name" value="TRAM"/>
    <property type="match status" value="1"/>
</dbReference>
<reference key="1">
    <citation type="journal article" date="2014" name="Stand. Genomic Sci.">
        <title>Complete genome sequence of Burkholderia phymatum STM815(T), a broad host range and efficient nitrogen-fixing symbiont of Mimosa species.</title>
        <authorList>
            <person name="Moulin L."/>
            <person name="Klonowska A."/>
            <person name="Caroline B."/>
            <person name="Booth K."/>
            <person name="Vriezen J.A."/>
            <person name="Melkonian R."/>
            <person name="James E.K."/>
            <person name="Young J.P."/>
            <person name="Bena G."/>
            <person name="Hauser L."/>
            <person name="Land M."/>
            <person name="Kyrpides N."/>
            <person name="Bruce D."/>
            <person name="Chain P."/>
            <person name="Copeland A."/>
            <person name="Pitluck S."/>
            <person name="Woyke T."/>
            <person name="Lizotte-Waniewski M."/>
            <person name="Bristow J."/>
            <person name="Riley M."/>
        </authorList>
    </citation>
    <scope>NUCLEOTIDE SEQUENCE [LARGE SCALE GENOMIC DNA]</scope>
    <source>
        <strain>DSM 17167 / CIP 108236 / LMG 21445 / STM815</strain>
    </source>
</reference>
<sequence>MSQTSISSAPTALTPKVGFVSLGCPKALVDSEQIITQLRAEGYEISGTYDGADLVVVNTCGFIDEAVQESLDAIGEALNENGKVIVTGCLGAKQSASGSNLIEEVHPKVLAVTGPHAVGEVMQAVHSHLPKPHDPFVDLVPAAGVKLTPRHYAYLKISEGCNHRCTFCIIPSMRGDLVSRPVAEVMLEAENLFKSGVKELLVISQDTSAYGVDVKYRTGFWNGKPIKTRMTDLVGALGELAAQYGAWVRLHYVYPYPSVDEVIPMMAEGSFKGHVLPYLDVPFQHAHPEVLKRMKRPANAEKVLERVRAWREICPDLTIRSTFIAGFPGETQEQFETLLDFIREAELDRVGCFAYSPVEGATANELDGALPDEVREARRARFMEVAEQVSAKRMARKVGKTLKVLVDEINPDGGIGRTAADAPEIDGVVYIAPATKASKRYKVGDFVSVKITGADGHDLWGEV</sequence>
<protein>
    <recommendedName>
        <fullName evidence="1">Ribosomal protein uS12 methylthiotransferase RimO</fullName>
        <shortName evidence="1">uS12 MTTase</shortName>
        <shortName evidence="1">uS12 methylthiotransferase</shortName>
        <ecNumber evidence="1">2.8.4.4</ecNumber>
    </recommendedName>
    <alternativeName>
        <fullName evidence="1">Ribosomal protein uS12 (aspartate-C(3))-methylthiotransferase</fullName>
    </alternativeName>
    <alternativeName>
        <fullName evidence="1">Ribosome maturation factor RimO</fullName>
    </alternativeName>
</protein>
<evidence type="ECO:0000255" key="1">
    <source>
        <dbReference type="HAMAP-Rule" id="MF_01865"/>
    </source>
</evidence>
<evidence type="ECO:0000255" key="2">
    <source>
        <dbReference type="PROSITE-ProRule" id="PRU01266"/>
    </source>
</evidence>